<name>RL3_VIBPA</name>
<dbReference type="EMBL" id="BA000031">
    <property type="protein sequence ID" value="BAC58520.1"/>
    <property type="molecule type" value="Genomic_DNA"/>
</dbReference>
<dbReference type="RefSeq" id="NP_796636.1">
    <property type="nucleotide sequence ID" value="NC_004603.1"/>
</dbReference>
<dbReference type="RefSeq" id="WP_005456132.1">
    <property type="nucleotide sequence ID" value="NC_004603.1"/>
</dbReference>
<dbReference type="SMR" id="Q87T13"/>
<dbReference type="GeneID" id="1187724"/>
<dbReference type="KEGG" id="vpa:VP0257"/>
<dbReference type="PATRIC" id="fig|223926.6.peg.248"/>
<dbReference type="eggNOG" id="COG0087">
    <property type="taxonomic scope" value="Bacteria"/>
</dbReference>
<dbReference type="HOGENOM" id="CLU_044142_4_1_6"/>
<dbReference type="Proteomes" id="UP000002493">
    <property type="component" value="Chromosome 1"/>
</dbReference>
<dbReference type="GO" id="GO:0022625">
    <property type="term" value="C:cytosolic large ribosomal subunit"/>
    <property type="evidence" value="ECO:0007669"/>
    <property type="project" value="TreeGrafter"/>
</dbReference>
<dbReference type="GO" id="GO:0019843">
    <property type="term" value="F:rRNA binding"/>
    <property type="evidence" value="ECO:0007669"/>
    <property type="project" value="UniProtKB-UniRule"/>
</dbReference>
<dbReference type="GO" id="GO:0003735">
    <property type="term" value="F:structural constituent of ribosome"/>
    <property type="evidence" value="ECO:0007669"/>
    <property type="project" value="InterPro"/>
</dbReference>
<dbReference type="GO" id="GO:0006412">
    <property type="term" value="P:translation"/>
    <property type="evidence" value="ECO:0007669"/>
    <property type="project" value="UniProtKB-UniRule"/>
</dbReference>
<dbReference type="FunFam" id="2.40.30.10:FF:000004">
    <property type="entry name" value="50S ribosomal protein L3"/>
    <property type="match status" value="1"/>
</dbReference>
<dbReference type="FunFam" id="3.30.160.810:FF:000001">
    <property type="entry name" value="50S ribosomal protein L3"/>
    <property type="match status" value="1"/>
</dbReference>
<dbReference type="Gene3D" id="3.30.160.810">
    <property type="match status" value="1"/>
</dbReference>
<dbReference type="Gene3D" id="2.40.30.10">
    <property type="entry name" value="Translation factors"/>
    <property type="match status" value="1"/>
</dbReference>
<dbReference type="HAMAP" id="MF_01325_B">
    <property type="entry name" value="Ribosomal_uL3_B"/>
    <property type="match status" value="1"/>
</dbReference>
<dbReference type="InterPro" id="IPR000597">
    <property type="entry name" value="Ribosomal_uL3"/>
</dbReference>
<dbReference type="InterPro" id="IPR019927">
    <property type="entry name" value="Ribosomal_uL3_bac/org-type"/>
</dbReference>
<dbReference type="InterPro" id="IPR019926">
    <property type="entry name" value="Ribosomal_uL3_CS"/>
</dbReference>
<dbReference type="InterPro" id="IPR009000">
    <property type="entry name" value="Transl_B-barrel_sf"/>
</dbReference>
<dbReference type="NCBIfam" id="TIGR03625">
    <property type="entry name" value="L3_bact"/>
    <property type="match status" value="1"/>
</dbReference>
<dbReference type="PANTHER" id="PTHR11229">
    <property type="entry name" value="50S RIBOSOMAL PROTEIN L3"/>
    <property type="match status" value="1"/>
</dbReference>
<dbReference type="PANTHER" id="PTHR11229:SF16">
    <property type="entry name" value="LARGE RIBOSOMAL SUBUNIT PROTEIN UL3C"/>
    <property type="match status" value="1"/>
</dbReference>
<dbReference type="Pfam" id="PF00297">
    <property type="entry name" value="Ribosomal_L3"/>
    <property type="match status" value="1"/>
</dbReference>
<dbReference type="SUPFAM" id="SSF50447">
    <property type="entry name" value="Translation proteins"/>
    <property type="match status" value="1"/>
</dbReference>
<dbReference type="PROSITE" id="PS00474">
    <property type="entry name" value="RIBOSOMAL_L3"/>
    <property type="match status" value="1"/>
</dbReference>
<organism>
    <name type="scientific">Vibrio parahaemolyticus serotype O3:K6 (strain RIMD 2210633)</name>
    <dbReference type="NCBI Taxonomy" id="223926"/>
    <lineage>
        <taxon>Bacteria</taxon>
        <taxon>Pseudomonadati</taxon>
        <taxon>Pseudomonadota</taxon>
        <taxon>Gammaproteobacteria</taxon>
        <taxon>Vibrionales</taxon>
        <taxon>Vibrionaceae</taxon>
        <taxon>Vibrio</taxon>
    </lineage>
</organism>
<proteinExistence type="inferred from homology"/>
<gene>
    <name evidence="1" type="primary">rplC</name>
    <name type="ordered locus">VP0257</name>
</gene>
<feature type="chain" id="PRO_0000077187" description="Large ribosomal subunit protein uL3">
    <location>
        <begin position="1"/>
        <end position="209"/>
    </location>
</feature>
<feature type="modified residue" description="N5-methylglutamine" evidence="1">
    <location>
        <position position="150"/>
    </location>
</feature>
<sequence>MIGLIGRKVGMTRVFTEEGVSIPVTVVEVEANRVSQVKTLETDGYAAIQVTAGSKKANRVNKAEAGHFAKAGVEAGRGLWEFRLENGEEFEVGAELTVELFNETKKVDVTGTSKGKGFQGAVKRWNFRTQDMTHGNSLSHRAPGSIGQCQTPGRVFKGKKMAGHMGAERVTTQNLEIVRVDAERNLLLIKGAVPGATGGNVIVKPAVKA</sequence>
<comment type="function">
    <text evidence="1">One of the primary rRNA binding proteins, it binds directly near the 3'-end of the 23S rRNA, where it nucleates assembly of the 50S subunit.</text>
</comment>
<comment type="subunit">
    <text evidence="1">Part of the 50S ribosomal subunit. Forms a cluster with proteins L14 and L19.</text>
</comment>
<comment type="PTM">
    <text evidence="1">Methylated by PrmB.</text>
</comment>
<comment type="similarity">
    <text evidence="1">Belongs to the universal ribosomal protein uL3 family.</text>
</comment>
<reference key="1">
    <citation type="journal article" date="2003" name="Lancet">
        <title>Genome sequence of Vibrio parahaemolyticus: a pathogenic mechanism distinct from that of V. cholerae.</title>
        <authorList>
            <person name="Makino K."/>
            <person name="Oshima K."/>
            <person name="Kurokawa K."/>
            <person name="Yokoyama K."/>
            <person name="Uda T."/>
            <person name="Tagomori K."/>
            <person name="Iijima Y."/>
            <person name="Najima M."/>
            <person name="Nakano M."/>
            <person name="Yamashita A."/>
            <person name="Kubota Y."/>
            <person name="Kimura S."/>
            <person name="Yasunaga T."/>
            <person name="Honda T."/>
            <person name="Shinagawa H."/>
            <person name="Hattori M."/>
            <person name="Iida T."/>
        </authorList>
    </citation>
    <scope>NUCLEOTIDE SEQUENCE [LARGE SCALE GENOMIC DNA]</scope>
    <source>
        <strain>RIMD 2210633</strain>
    </source>
</reference>
<protein>
    <recommendedName>
        <fullName evidence="1">Large ribosomal subunit protein uL3</fullName>
    </recommendedName>
    <alternativeName>
        <fullName evidence="2">50S ribosomal protein L3</fullName>
    </alternativeName>
</protein>
<keyword id="KW-0488">Methylation</keyword>
<keyword id="KW-0687">Ribonucleoprotein</keyword>
<keyword id="KW-0689">Ribosomal protein</keyword>
<keyword id="KW-0694">RNA-binding</keyword>
<keyword id="KW-0699">rRNA-binding</keyword>
<evidence type="ECO:0000255" key="1">
    <source>
        <dbReference type="HAMAP-Rule" id="MF_01325"/>
    </source>
</evidence>
<evidence type="ECO:0000305" key="2"/>
<accession>Q87T13</accession>